<gene>
    <name type="primary">apg-7</name>
    <name type="synonym">atg9</name>
    <name type="ORF">NCU02422</name>
</gene>
<protein>
    <recommendedName>
        <fullName>Autophagy-related protein 9</fullName>
    </recommendedName>
</protein>
<comment type="function">
    <text evidence="2">Phospholipid scramblase involved in autophagy and cytoplasm to vacuole transport (Cvt) vesicle formation. Cycles between the preautophagosomal structure/phagophore assembly site (PAS) and the cytoplasmic vesicle pool and supplies membrane for the growing autophagosome. Lipid scramblase activity plays a key role in preautophagosomal structure/phagophore assembly by distributing the phospholipids that arrive through atg-2 from the cytoplasmic to the luminal leaflet of the bilayer, thereby driving autophagosomal membrane expansion. Required for mitophagy. Also involved in endoplasmic reticulum-specific autophagic process and is essential for the survival of cells subjected to severe ER stress. Different machineries are required for anterograde trafficking to the PAS during either the Cvt pathway or bulk autophagy and for retrograde trafficking.</text>
</comment>
<comment type="catalytic activity">
    <reaction evidence="2">
        <text>a 1,2-diacyl-sn-glycero-3-phosphocholine(in) = a 1,2-diacyl-sn-glycero-3-phosphocholine(out)</text>
        <dbReference type="Rhea" id="RHEA:38571"/>
        <dbReference type="ChEBI" id="CHEBI:57643"/>
    </reaction>
</comment>
<comment type="catalytic activity">
    <reaction evidence="2">
        <text>a 1,2-diacyl-sn-glycero-3-phospho-L-serine(in) = a 1,2-diacyl-sn-glycero-3-phospho-L-serine(out)</text>
        <dbReference type="Rhea" id="RHEA:38663"/>
        <dbReference type="ChEBI" id="CHEBI:57262"/>
    </reaction>
</comment>
<comment type="catalytic activity">
    <reaction evidence="2">
        <text>a 1,2-diacyl-sn-glycero-3-phosphoethanolamine(in) = a 1,2-diacyl-sn-glycero-3-phosphoethanolamine(out)</text>
        <dbReference type="Rhea" id="RHEA:38895"/>
        <dbReference type="ChEBI" id="CHEBI:64612"/>
    </reaction>
</comment>
<comment type="catalytic activity">
    <reaction evidence="2">
        <text>a 1,2-diacyl-sn-glycero-3-phospho-(1D-myo-inositol-3-phosphate)(in) = a 1,2-diacyl-sn-glycero-3-phospho-(1D-myo-inositol-3-phosphate)(out)</text>
        <dbReference type="Rhea" id="RHEA:67920"/>
        <dbReference type="ChEBI" id="CHEBI:58088"/>
    </reaction>
</comment>
<comment type="subunit">
    <text evidence="1">Homotrimer; forms a homotrimer with a central pore that forms a path between the two membrane leaflets.</text>
</comment>
<comment type="subcellular location">
    <subcellularLocation>
        <location evidence="2">Preautophagosomal structure membrane</location>
        <topology evidence="2">Multi-pass membrane protein</topology>
    </subcellularLocation>
    <subcellularLocation>
        <location evidence="2">Cytoplasmic vesicle membrane</location>
        <topology evidence="2">Multi-pass membrane protein</topology>
    </subcellularLocation>
    <subcellularLocation>
        <location evidence="2">Golgi apparatus membrane</location>
        <topology evidence="2">Multi-pass membrane protein</topology>
    </subcellularLocation>
    <subcellularLocation>
        <location evidence="2">Endoplasmic reticulum membrane</location>
        <topology evidence="2">Multi-pass membrane protein</topology>
    </subcellularLocation>
</comment>
<comment type="domain">
    <text evidence="1">Forms a homotrimer with a solvated central pore, which is connected laterally to the cytosol through the cavity within each protomer. Acts as a lipid scramblase that uses its central pore to function: the central pore opens laterally to accommodate lipid headgroups, thereby enabling lipid flipping and redistribution of lipids added to the outer leaflet of apg-7/atg9-containing vesicles, thereby enabling growth into autophagosomes.</text>
</comment>
<comment type="PTM">
    <text evidence="2">Phosphorylated by apg-1. Apg-1 phosphorylation is required for preautophagosome elongation.</text>
</comment>
<comment type="similarity">
    <text evidence="5">Belongs to the ATG9 family.</text>
</comment>
<evidence type="ECO:0000250" key="1">
    <source>
        <dbReference type="UniProtKB" id="O74312"/>
    </source>
</evidence>
<evidence type="ECO:0000250" key="2">
    <source>
        <dbReference type="UniProtKB" id="Q12142"/>
    </source>
</evidence>
<evidence type="ECO:0000255" key="3"/>
<evidence type="ECO:0000256" key="4">
    <source>
        <dbReference type="SAM" id="MobiDB-lite"/>
    </source>
</evidence>
<evidence type="ECO:0000305" key="5"/>
<feature type="chain" id="PRO_0000119834" description="Autophagy-related protein 9">
    <location>
        <begin position="1"/>
        <end position="908"/>
    </location>
</feature>
<feature type="topological domain" description="Cytoplasmic" evidence="5">
    <location>
        <begin position="1"/>
        <end position="216"/>
    </location>
</feature>
<feature type="transmembrane region" description="Helical" evidence="3">
    <location>
        <begin position="217"/>
        <end position="237"/>
    </location>
</feature>
<feature type="topological domain" description="Lumenal" evidence="5">
    <location>
        <begin position="238"/>
        <end position="259"/>
    </location>
</feature>
<feature type="transmembrane region" description="Helical" evidence="3">
    <location>
        <begin position="260"/>
        <end position="280"/>
    </location>
</feature>
<feature type="topological domain" description="Cytoplasmic" evidence="5">
    <location>
        <begin position="281"/>
        <end position="433"/>
    </location>
</feature>
<feature type="intramembrane region" evidence="1">
    <location>
        <begin position="434"/>
        <end position="454"/>
    </location>
</feature>
<feature type="topological domain" description="Cytoplasmic" evidence="5">
    <location>
        <begin position="455"/>
        <end position="525"/>
    </location>
</feature>
<feature type="transmembrane region" description="Helical" evidence="3">
    <location>
        <begin position="526"/>
        <end position="546"/>
    </location>
</feature>
<feature type="topological domain" description="Lumenal" evidence="5">
    <location>
        <begin position="547"/>
        <end position="555"/>
    </location>
</feature>
<feature type="transmembrane region" description="Helical" evidence="3">
    <location>
        <begin position="556"/>
        <end position="576"/>
    </location>
</feature>
<feature type="topological domain" description="Cytoplasmic" evidence="5">
    <location>
        <begin position="577"/>
        <end position="622"/>
    </location>
</feature>
<feature type="intramembrane region" evidence="1">
    <location>
        <begin position="623"/>
        <end position="643"/>
    </location>
</feature>
<feature type="topological domain" description="Cytoplasmic" evidence="5">
    <location>
        <begin position="644"/>
        <end position="908"/>
    </location>
</feature>
<feature type="region of interest" description="Disordered" evidence="4">
    <location>
        <begin position="64"/>
        <end position="162"/>
    </location>
</feature>
<feature type="region of interest" description="Disordered" evidence="4">
    <location>
        <begin position="751"/>
        <end position="779"/>
    </location>
</feature>
<feature type="region of interest" description="Disordered" evidence="4">
    <location>
        <begin position="809"/>
        <end position="878"/>
    </location>
</feature>
<feature type="compositionally biased region" description="Gly residues" evidence="4">
    <location>
        <begin position="813"/>
        <end position="825"/>
    </location>
</feature>
<feature type="compositionally biased region" description="Basic and acidic residues" evidence="4">
    <location>
        <begin position="839"/>
        <end position="852"/>
    </location>
</feature>
<feature type="glycosylation site" description="N-linked (GlcNAc...) asparagine" evidence="3">
    <location>
        <position position="259"/>
    </location>
</feature>
<organism>
    <name type="scientific">Neurospora crassa (strain ATCC 24698 / 74-OR23-1A / CBS 708.71 / DSM 1257 / FGSC 987)</name>
    <dbReference type="NCBI Taxonomy" id="367110"/>
    <lineage>
        <taxon>Eukaryota</taxon>
        <taxon>Fungi</taxon>
        <taxon>Dikarya</taxon>
        <taxon>Ascomycota</taxon>
        <taxon>Pezizomycotina</taxon>
        <taxon>Sordariomycetes</taxon>
        <taxon>Sordariomycetidae</taxon>
        <taxon>Sordariales</taxon>
        <taxon>Sordariaceae</taxon>
        <taxon>Neurospora</taxon>
    </lineage>
</organism>
<sequence length="908" mass="102641">MADGVIARLMSGGRGARSFYEELRGRDNVSDVDDRAGLLDEENLNQHFNDYDLENAEGLRLEDSRATVDGRIPRGRAQLSGRPPRPAATTHWGTSHDDDGDNDVPASLLVERYDRGAAPLGSPGKPRSQHAGSRAHPAPGLSKGRTHQQRPHIDQELQPPLHSDAAPSSLLAGAITGNAKKMAEWRWANITNLDSFMQDVYSYYRGSGMWCIVVERVLHLIKVAFVAFLLTFLSQCVDFKKIPSNQKLSQVLVPQCTRNMSGLWNIGLWLFAFYFMWKSIQYILDLRRLTHVRDFYIHLLNIPDEDMQTITWQEVVARIMVLRDQNVRTTRTITPQNQRWVLGSQSKERLDASDIANRLMRRENYMIAMINKDILDLTIPLPILRNRQLLSQTLEWTLMFSILDFVFDPKGQVHQEFLRSDRRGILSAKLRSRFIFAGVMILILSPFVAGYLIIVYFLEYYNEIQKNPSILSARSYTPLAEWKFREFNELPHLFKRRLDMSHPFASHYIDQFPKAKTSMVAKTVSFIAGSIATVLALISVFDPEMFLGFEITHDRTVLFYTAVFGAIWSVARGSVSEDNAVFDPEYALGNVVEYTHYQPEHWKDRWHSADVKAEFEELYKLKLVIFIEEILSILTTPFVLFFSLPKSADQIIDFFREFTIHVDGLGYVCYFAEFDFKKGSKSQAPAATAGEGDVRDDYYSTKHGKMEASMYGFINNYARNPKHLPPAMRQQFHLPPVFPGITSPTLAGDLAASRMGRSQRGRSKGPLPSRTPRPGAVMAEPSPMASILLDPRHQPIFPNNMSFVNTGHQFRGGNQGDGHMMGGGSMEEDVKGAARHGQQTHDDESEDSRAGLDESAWQVSPTKDLSRENSGRGLDSVVGEEAGNGAGVVHMLYQFNQAHLNRRLGGVR</sequence>
<dbReference type="EMBL" id="CM002242">
    <property type="protein sequence ID" value="EAA30368.1"/>
    <property type="molecule type" value="Genomic_DNA"/>
</dbReference>
<dbReference type="RefSeq" id="XP_959604.1">
    <property type="nucleotide sequence ID" value="XM_954511.2"/>
</dbReference>
<dbReference type="SMR" id="Q7S4D7"/>
<dbReference type="STRING" id="367110.Q7S4D7"/>
<dbReference type="GlyCosmos" id="Q7S4D7">
    <property type="glycosylation" value="1 site, No reported glycans"/>
</dbReference>
<dbReference type="PaxDb" id="5141-EFNCRP00000003157"/>
<dbReference type="EnsemblFungi" id="EAA30368">
    <property type="protein sequence ID" value="EAA30368"/>
    <property type="gene ID" value="NCU02422"/>
</dbReference>
<dbReference type="GeneID" id="3875751"/>
<dbReference type="KEGG" id="ncr:NCU02422"/>
<dbReference type="VEuPathDB" id="FungiDB:NCU02422"/>
<dbReference type="HOGENOM" id="CLU_006200_1_1_1"/>
<dbReference type="InParanoid" id="Q7S4D7"/>
<dbReference type="OMA" id="MMHYFFR"/>
<dbReference type="OrthoDB" id="2020634at2759"/>
<dbReference type="Proteomes" id="UP000001805">
    <property type="component" value="Chromosome 7, Linkage Group VII"/>
</dbReference>
<dbReference type="GO" id="GO:0005776">
    <property type="term" value="C:autophagosome"/>
    <property type="evidence" value="ECO:0000318"/>
    <property type="project" value="GO_Central"/>
</dbReference>
<dbReference type="GO" id="GO:0030659">
    <property type="term" value="C:cytoplasmic vesicle membrane"/>
    <property type="evidence" value="ECO:0007669"/>
    <property type="project" value="UniProtKB-SubCell"/>
</dbReference>
<dbReference type="GO" id="GO:0005789">
    <property type="term" value="C:endoplasmic reticulum membrane"/>
    <property type="evidence" value="ECO:0007669"/>
    <property type="project" value="UniProtKB-SubCell"/>
</dbReference>
<dbReference type="GO" id="GO:0000139">
    <property type="term" value="C:Golgi membrane"/>
    <property type="evidence" value="ECO:0007669"/>
    <property type="project" value="UniProtKB-SubCell"/>
</dbReference>
<dbReference type="GO" id="GO:0000407">
    <property type="term" value="C:phagophore assembly site"/>
    <property type="evidence" value="ECO:0000318"/>
    <property type="project" value="GO_Central"/>
</dbReference>
<dbReference type="GO" id="GO:0034045">
    <property type="term" value="C:phagophore assembly site membrane"/>
    <property type="evidence" value="ECO:0007669"/>
    <property type="project" value="UniProtKB-SubCell"/>
</dbReference>
<dbReference type="GO" id="GO:0006869">
    <property type="term" value="P:lipid transport"/>
    <property type="evidence" value="ECO:0007669"/>
    <property type="project" value="UniProtKB-KW"/>
</dbReference>
<dbReference type="GO" id="GO:0000423">
    <property type="term" value="P:mitophagy"/>
    <property type="evidence" value="ECO:0000318"/>
    <property type="project" value="GO_Central"/>
</dbReference>
<dbReference type="GO" id="GO:0034727">
    <property type="term" value="P:piecemeal microautophagy of the nucleus"/>
    <property type="evidence" value="ECO:0000318"/>
    <property type="project" value="GO_Central"/>
</dbReference>
<dbReference type="GO" id="GO:0034497">
    <property type="term" value="P:protein localization to phagophore assembly site"/>
    <property type="evidence" value="ECO:0000318"/>
    <property type="project" value="GO_Central"/>
</dbReference>
<dbReference type="GO" id="GO:0061709">
    <property type="term" value="P:reticulophagy"/>
    <property type="evidence" value="ECO:0000318"/>
    <property type="project" value="GO_Central"/>
</dbReference>
<dbReference type="InterPro" id="IPR007241">
    <property type="entry name" value="Autophagy-rel_prot_9"/>
</dbReference>
<dbReference type="PANTHER" id="PTHR13038">
    <property type="entry name" value="APG9 AUTOPHAGY 9"/>
    <property type="match status" value="1"/>
</dbReference>
<dbReference type="PANTHER" id="PTHR13038:SF10">
    <property type="entry name" value="AUTOPHAGY-RELATED PROTEIN 9"/>
    <property type="match status" value="1"/>
</dbReference>
<dbReference type="Pfam" id="PF04109">
    <property type="entry name" value="ATG9"/>
    <property type="match status" value="1"/>
</dbReference>
<accession>Q7S4D7</accession>
<name>ATG9_NEUCR</name>
<keyword id="KW-0072">Autophagy</keyword>
<keyword id="KW-0968">Cytoplasmic vesicle</keyword>
<keyword id="KW-0256">Endoplasmic reticulum</keyword>
<keyword id="KW-0325">Glycoprotein</keyword>
<keyword id="KW-0333">Golgi apparatus</keyword>
<keyword id="KW-0445">Lipid transport</keyword>
<keyword id="KW-0472">Membrane</keyword>
<keyword id="KW-0597">Phosphoprotein</keyword>
<keyword id="KW-1185">Reference proteome</keyword>
<keyword id="KW-0812">Transmembrane</keyword>
<keyword id="KW-1133">Transmembrane helix</keyword>
<keyword id="KW-0813">Transport</keyword>
<reference key="1">
    <citation type="journal article" date="2003" name="Nature">
        <title>The genome sequence of the filamentous fungus Neurospora crassa.</title>
        <authorList>
            <person name="Galagan J.E."/>
            <person name="Calvo S.E."/>
            <person name="Borkovich K.A."/>
            <person name="Selker E.U."/>
            <person name="Read N.D."/>
            <person name="Jaffe D.B."/>
            <person name="FitzHugh W."/>
            <person name="Ma L.-J."/>
            <person name="Smirnov S."/>
            <person name="Purcell S."/>
            <person name="Rehman B."/>
            <person name="Elkins T."/>
            <person name="Engels R."/>
            <person name="Wang S."/>
            <person name="Nielsen C.B."/>
            <person name="Butler J."/>
            <person name="Endrizzi M."/>
            <person name="Qui D."/>
            <person name="Ianakiev P."/>
            <person name="Bell-Pedersen D."/>
            <person name="Nelson M.A."/>
            <person name="Werner-Washburne M."/>
            <person name="Selitrennikoff C.P."/>
            <person name="Kinsey J.A."/>
            <person name="Braun E.L."/>
            <person name="Zelter A."/>
            <person name="Schulte U."/>
            <person name="Kothe G.O."/>
            <person name="Jedd G."/>
            <person name="Mewes H.-W."/>
            <person name="Staben C."/>
            <person name="Marcotte E."/>
            <person name="Greenberg D."/>
            <person name="Roy A."/>
            <person name="Foley K."/>
            <person name="Naylor J."/>
            <person name="Stange-Thomann N."/>
            <person name="Barrett R."/>
            <person name="Gnerre S."/>
            <person name="Kamal M."/>
            <person name="Kamvysselis M."/>
            <person name="Mauceli E.W."/>
            <person name="Bielke C."/>
            <person name="Rudd S."/>
            <person name="Frishman D."/>
            <person name="Krystofova S."/>
            <person name="Rasmussen C."/>
            <person name="Metzenberg R.L."/>
            <person name="Perkins D.D."/>
            <person name="Kroken S."/>
            <person name="Cogoni C."/>
            <person name="Macino G."/>
            <person name="Catcheside D.E.A."/>
            <person name="Li W."/>
            <person name="Pratt R.J."/>
            <person name="Osmani S.A."/>
            <person name="DeSouza C.P.C."/>
            <person name="Glass N.L."/>
            <person name="Orbach M.J."/>
            <person name="Berglund J.A."/>
            <person name="Voelker R."/>
            <person name="Yarden O."/>
            <person name="Plamann M."/>
            <person name="Seiler S."/>
            <person name="Dunlap J.C."/>
            <person name="Radford A."/>
            <person name="Aramayo R."/>
            <person name="Natvig D.O."/>
            <person name="Alex L.A."/>
            <person name="Mannhaupt G."/>
            <person name="Ebbole D.J."/>
            <person name="Freitag M."/>
            <person name="Paulsen I."/>
            <person name="Sachs M.S."/>
            <person name="Lander E.S."/>
            <person name="Nusbaum C."/>
            <person name="Birren B.W."/>
        </authorList>
    </citation>
    <scope>NUCLEOTIDE SEQUENCE [LARGE SCALE GENOMIC DNA]</scope>
    <source>
        <strain>ATCC 24698 / 74-OR23-1A / CBS 708.71 / DSM 1257 / FGSC 987</strain>
    </source>
</reference>
<proteinExistence type="inferred from homology"/>